<protein>
    <recommendedName>
        <fullName>Zinc finger protein 318</fullName>
    </recommendedName>
    <alternativeName>
        <fullName>Testicular zinc finger protein</fullName>
    </alternativeName>
</protein>
<keyword id="KW-0010">Activator</keyword>
<keyword id="KW-0025">Alternative splicing</keyword>
<keyword id="KW-0175">Coiled coil</keyword>
<keyword id="KW-1017">Isopeptide bond</keyword>
<keyword id="KW-0469">Meiosis</keyword>
<keyword id="KW-0479">Metal-binding</keyword>
<keyword id="KW-0539">Nucleus</keyword>
<keyword id="KW-0597">Phosphoprotein</keyword>
<keyword id="KW-1185">Reference proteome</keyword>
<keyword id="KW-0677">Repeat</keyword>
<keyword id="KW-0678">Repressor</keyword>
<keyword id="KW-0804">Transcription</keyword>
<keyword id="KW-0805">Transcription regulation</keyword>
<keyword id="KW-0832">Ubl conjugation</keyword>
<keyword id="KW-0862">Zinc</keyword>
<keyword id="KW-0863">Zinc-finger</keyword>
<feature type="chain" id="PRO_0000191808" description="Zinc finger protein 318">
    <location>
        <begin position="1"/>
        <end position="2237"/>
    </location>
</feature>
<feature type="zinc finger region" description="Matrin-type 1">
    <location>
        <begin position="1085"/>
        <end position="1119"/>
    </location>
</feature>
<feature type="zinc finger region" description="Matrin-type 2">
    <location>
        <begin position="1158"/>
        <end position="1180"/>
    </location>
</feature>
<feature type="region of interest" description="Interaction with AR" evidence="7">
    <location>
        <begin position="1"/>
        <end position="1114"/>
    </location>
</feature>
<feature type="region of interest" description="Disordered" evidence="3">
    <location>
        <begin position="1"/>
        <end position="221"/>
    </location>
</feature>
<feature type="region of interest" description="Disordered" evidence="3">
    <location>
        <begin position="263"/>
        <end position="350"/>
    </location>
</feature>
<feature type="region of interest" description="Disordered" evidence="3">
    <location>
        <begin position="551"/>
        <end position="612"/>
    </location>
</feature>
<feature type="region of interest" description="Disordered" evidence="3">
    <location>
        <begin position="645"/>
        <end position="732"/>
    </location>
</feature>
<feature type="region of interest" description="Disordered" evidence="3">
    <location>
        <begin position="945"/>
        <end position="966"/>
    </location>
</feature>
<feature type="region of interest" description="Disordered" evidence="3">
    <location>
        <begin position="1013"/>
        <end position="1072"/>
    </location>
</feature>
<feature type="region of interest" description="Disordered" evidence="3">
    <location>
        <begin position="1245"/>
        <end position="1289"/>
    </location>
</feature>
<feature type="region of interest" description="Disordered" evidence="3">
    <location>
        <begin position="1302"/>
        <end position="1342"/>
    </location>
</feature>
<feature type="region of interest" description="Disordered" evidence="3">
    <location>
        <begin position="1366"/>
        <end position="1395"/>
    </location>
</feature>
<feature type="region of interest" description="Disordered" evidence="3">
    <location>
        <begin position="1449"/>
        <end position="1497"/>
    </location>
</feature>
<feature type="region of interest" description="Disordered" evidence="3">
    <location>
        <begin position="1614"/>
        <end position="1651"/>
    </location>
</feature>
<feature type="region of interest" description="Disordered" evidence="3">
    <location>
        <begin position="1727"/>
        <end position="1770"/>
    </location>
</feature>
<feature type="region of interest" description="Disordered" evidence="3">
    <location>
        <begin position="1790"/>
        <end position="1867"/>
    </location>
</feature>
<feature type="region of interest" description="Disordered" evidence="3">
    <location>
        <begin position="2039"/>
        <end position="2064"/>
    </location>
</feature>
<feature type="region of interest" description="Disordered" evidence="3">
    <location>
        <begin position="2178"/>
        <end position="2237"/>
    </location>
</feature>
<feature type="coiled-coil region" evidence="2">
    <location>
        <begin position="348"/>
        <end position="376"/>
    </location>
</feature>
<feature type="coiled-coil region" evidence="2">
    <location>
        <begin position="904"/>
        <end position="1003"/>
    </location>
</feature>
<feature type="coiled-coil region" evidence="2">
    <location>
        <begin position="1798"/>
        <end position="1827"/>
    </location>
</feature>
<feature type="compositionally biased region" description="Low complexity" evidence="3">
    <location>
        <begin position="1"/>
        <end position="12"/>
    </location>
</feature>
<feature type="compositionally biased region" description="Low complexity" evidence="3">
    <location>
        <begin position="30"/>
        <end position="39"/>
    </location>
</feature>
<feature type="compositionally biased region" description="Basic residues" evidence="3">
    <location>
        <begin position="53"/>
        <end position="66"/>
    </location>
</feature>
<feature type="compositionally biased region" description="Basic and acidic residues" evidence="3">
    <location>
        <begin position="140"/>
        <end position="156"/>
    </location>
</feature>
<feature type="compositionally biased region" description="Basic and acidic residues" evidence="3">
    <location>
        <begin position="274"/>
        <end position="290"/>
    </location>
</feature>
<feature type="compositionally biased region" description="Basic and acidic residues" evidence="3">
    <location>
        <begin position="297"/>
        <end position="317"/>
    </location>
</feature>
<feature type="compositionally biased region" description="Polar residues" evidence="3">
    <location>
        <begin position="321"/>
        <end position="332"/>
    </location>
</feature>
<feature type="compositionally biased region" description="Acidic residues" evidence="3">
    <location>
        <begin position="560"/>
        <end position="576"/>
    </location>
</feature>
<feature type="compositionally biased region" description="Basic and acidic residues" evidence="3">
    <location>
        <begin position="577"/>
        <end position="586"/>
    </location>
</feature>
<feature type="compositionally biased region" description="Polar residues" evidence="3">
    <location>
        <begin position="592"/>
        <end position="602"/>
    </location>
</feature>
<feature type="compositionally biased region" description="Basic and acidic residues" evidence="3">
    <location>
        <begin position="658"/>
        <end position="677"/>
    </location>
</feature>
<feature type="compositionally biased region" description="Basic and acidic residues" evidence="3">
    <location>
        <begin position="692"/>
        <end position="706"/>
    </location>
</feature>
<feature type="compositionally biased region" description="Basic and acidic residues" evidence="3">
    <location>
        <begin position="945"/>
        <end position="964"/>
    </location>
</feature>
<feature type="compositionally biased region" description="Basic and acidic residues" evidence="3">
    <location>
        <begin position="1013"/>
        <end position="1037"/>
    </location>
</feature>
<feature type="compositionally biased region" description="Basic and acidic residues" evidence="3">
    <location>
        <begin position="1047"/>
        <end position="1056"/>
    </location>
</feature>
<feature type="compositionally biased region" description="Polar residues" evidence="3">
    <location>
        <begin position="1058"/>
        <end position="1072"/>
    </location>
</feature>
<feature type="compositionally biased region" description="Basic and acidic residues" evidence="3">
    <location>
        <begin position="1280"/>
        <end position="1289"/>
    </location>
</feature>
<feature type="compositionally biased region" description="Basic and acidic residues" evidence="3">
    <location>
        <begin position="1304"/>
        <end position="1313"/>
    </location>
</feature>
<feature type="compositionally biased region" description="Basic and acidic residues" evidence="3">
    <location>
        <begin position="1321"/>
        <end position="1341"/>
    </location>
</feature>
<feature type="compositionally biased region" description="Pro residues" evidence="3">
    <location>
        <begin position="1469"/>
        <end position="1490"/>
    </location>
</feature>
<feature type="compositionally biased region" description="Polar residues" evidence="3">
    <location>
        <begin position="1618"/>
        <end position="1639"/>
    </location>
</feature>
<feature type="compositionally biased region" description="Low complexity" evidence="3">
    <location>
        <begin position="1640"/>
        <end position="1651"/>
    </location>
</feature>
<feature type="compositionally biased region" description="Basic and acidic residues" evidence="3">
    <location>
        <begin position="1734"/>
        <end position="1749"/>
    </location>
</feature>
<feature type="compositionally biased region" description="Polar residues" evidence="3">
    <location>
        <begin position="1757"/>
        <end position="1770"/>
    </location>
</feature>
<feature type="compositionally biased region" description="Basic and acidic residues" evidence="3">
    <location>
        <begin position="1796"/>
        <end position="1814"/>
    </location>
</feature>
<feature type="compositionally biased region" description="Acidic residues" evidence="3">
    <location>
        <begin position="1815"/>
        <end position="1824"/>
    </location>
</feature>
<feature type="compositionally biased region" description="Polar residues" evidence="3">
    <location>
        <begin position="1828"/>
        <end position="1840"/>
    </location>
</feature>
<feature type="compositionally biased region" description="Polar residues" evidence="3">
    <location>
        <begin position="2041"/>
        <end position="2058"/>
    </location>
</feature>
<feature type="compositionally biased region" description="Polar residues" evidence="3">
    <location>
        <begin position="2226"/>
        <end position="2237"/>
    </location>
</feature>
<feature type="modified residue" description="Phosphoserine" evidence="1">
    <location>
        <position position="40"/>
    </location>
</feature>
<feature type="modified residue" description="Phosphoserine" evidence="10">
    <location>
        <position position="69"/>
    </location>
</feature>
<feature type="modified residue" description="Phosphoserine" evidence="1">
    <location>
        <position position="109"/>
    </location>
</feature>
<feature type="modified residue" description="Phosphoserine" evidence="1">
    <location>
        <position position="111"/>
    </location>
</feature>
<feature type="modified residue" description="Phosphoserine" evidence="10">
    <location>
        <position position="167"/>
    </location>
</feature>
<feature type="modified residue" description="Phosphoserine" evidence="10">
    <location>
        <position position="205"/>
    </location>
</feature>
<feature type="modified residue" description="Phosphotyrosine" evidence="10">
    <location>
        <position position="237"/>
    </location>
</feature>
<feature type="modified residue" description="Phosphoserine" evidence="10">
    <location>
        <position position="239"/>
    </location>
</feature>
<feature type="modified residue" description="Phosphoserine" evidence="10">
    <location>
        <position position="246"/>
    </location>
</feature>
<feature type="modified residue" description="Phosphoserine" evidence="1">
    <location>
        <position position="497"/>
    </location>
</feature>
<feature type="modified residue" description="Phosphoserine" evidence="1">
    <location>
        <position position="502"/>
    </location>
</feature>
<feature type="modified residue" description="Phosphoserine" evidence="1">
    <location>
        <position position="531"/>
    </location>
</feature>
<feature type="modified residue" description="Phosphoserine" evidence="1">
    <location>
        <position position="557"/>
    </location>
</feature>
<feature type="modified residue" description="Phosphothreonine" evidence="1">
    <location>
        <position position="865"/>
    </location>
</feature>
<feature type="modified residue" description="Phosphoserine" evidence="1">
    <location>
        <position position="1032"/>
    </location>
</feature>
<feature type="modified residue" description="Phosphoserine" evidence="1">
    <location>
        <position position="1059"/>
    </location>
</feature>
<feature type="modified residue" description="Phosphoserine" evidence="1">
    <location>
        <position position="1445"/>
    </location>
</feature>
<feature type="modified residue" description="Phosphoserine" evidence="1">
    <location>
        <position position="1878"/>
    </location>
</feature>
<feature type="modified residue" description="Phosphoserine" evidence="1">
    <location>
        <position position="1908"/>
    </location>
</feature>
<feature type="modified residue" description="Phosphoserine" evidence="1">
    <location>
        <position position="1988"/>
    </location>
</feature>
<feature type="modified residue" description="Phosphoserine" evidence="1">
    <location>
        <position position="2044"/>
    </location>
</feature>
<feature type="modified residue" description="Phosphoserine" evidence="1">
    <location>
        <position position="2054"/>
    </location>
</feature>
<feature type="modified residue" description="Phosphoserine" evidence="1">
    <location>
        <position position="2140"/>
    </location>
</feature>
<feature type="modified residue" description="Phosphoserine" evidence="1">
    <location>
        <position position="2143"/>
    </location>
</feature>
<feature type="modified residue" description="Phosphoserine" evidence="1">
    <location>
        <position position="2194"/>
    </location>
</feature>
<feature type="modified residue" description="Phosphoserine" evidence="10">
    <location>
        <position position="2206"/>
    </location>
</feature>
<feature type="cross-link" description="Glycyl lysine isopeptide (Lys-Gly) (interchain with G-Cter in SUMO2)" evidence="1">
    <location>
        <position position="577"/>
    </location>
</feature>
<feature type="cross-link" description="Glycyl lysine isopeptide (Lys-Gly) (interchain with G-Cter in SUMO2)" evidence="1">
    <location>
        <position position="583"/>
    </location>
</feature>
<feature type="cross-link" description="Glycyl lysine isopeptide (Lys-Gly) (interchain with G-Cter in SUMO2)" evidence="1">
    <location>
        <position position="596"/>
    </location>
</feature>
<feature type="cross-link" description="Glycyl lysine isopeptide (Lys-Gly) (interchain with G-Cter in SUMO2)" evidence="1">
    <location>
        <position position="607"/>
    </location>
</feature>
<feature type="splice variant" id="VSP_016594" description="In isoform 2." evidence="8">
    <original>TLDPYNRPWASKTQSEAKQDTVKRTDKITVPAKGSEFLIP</original>
    <variation>GQFQKSSHFQTEGLKQMFLLQECRDRNHRDYGNNVRPCGQ</variation>
    <location>
        <begin position="1115"/>
        <end position="1154"/>
    </location>
</feature>
<feature type="splice variant" id="VSP_016595" description="In isoform 2." evidence="8">
    <location>
        <begin position="1155"/>
        <end position="2237"/>
    </location>
</feature>
<feature type="sequence conflict" description="In Ref. 2; AAF61636 and 3; AAK00650." evidence="9" ref="2 3">
    <original>V</original>
    <variation>D</variation>
    <location>
        <position position="223"/>
    </location>
</feature>
<feature type="sequence conflict" description="In Ref. 4; AAI50731." evidence="9" ref="4">
    <original>S</original>
    <variation>F</variation>
    <location>
        <position position="295"/>
    </location>
</feature>
<feature type="sequence conflict" description="In Ref. 2; AAF61636 and 3; AAK00650." evidence="9" ref="2 3">
    <original>K</original>
    <variation>R</variation>
    <location>
        <position position="509"/>
    </location>
</feature>
<feature type="sequence conflict" description="In Ref. 2; AAF61636 and 3; AAK00650." evidence="9" ref="2 3">
    <original>F</original>
    <variation>N</variation>
    <location>
        <position position="523"/>
    </location>
</feature>
<organism>
    <name type="scientific">Mus musculus</name>
    <name type="common">Mouse</name>
    <dbReference type="NCBI Taxonomy" id="10090"/>
    <lineage>
        <taxon>Eukaryota</taxon>
        <taxon>Metazoa</taxon>
        <taxon>Chordata</taxon>
        <taxon>Craniata</taxon>
        <taxon>Vertebrata</taxon>
        <taxon>Euteleostomi</taxon>
        <taxon>Mammalia</taxon>
        <taxon>Eutheria</taxon>
        <taxon>Euarchontoglires</taxon>
        <taxon>Glires</taxon>
        <taxon>Rodentia</taxon>
        <taxon>Myomorpha</taxon>
        <taxon>Muroidea</taxon>
        <taxon>Muridae</taxon>
        <taxon>Murinae</taxon>
        <taxon>Mus</taxon>
        <taxon>Mus</taxon>
    </lineage>
</organism>
<dbReference type="EMBL" id="AC151275">
    <property type="status" value="NOT_ANNOTATED_CDS"/>
    <property type="molecule type" value="Genomic_DNA"/>
</dbReference>
<dbReference type="EMBL" id="CT009572">
    <property type="status" value="NOT_ANNOTATED_CDS"/>
    <property type="molecule type" value="Genomic_DNA"/>
</dbReference>
<dbReference type="EMBL" id="AF159455">
    <property type="protein sequence ID" value="AAF61636.1"/>
    <property type="status" value="ALT_SEQ"/>
    <property type="molecule type" value="mRNA"/>
</dbReference>
<dbReference type="EMBL" id="AF227194">
    <property type="protein sequence ID" value="AAK00650.1"/>
    <property type="status" value="ALT_SEQ"/>
    <property type="molecule type" value="mRNA"/>
</dbReference>
<dbReference type="EMBL" id="BC150730">
    <property type="protein sequence ID" value="AAI50731.1"/>
    <property type="status" value="ALT_SEQ"/>
    <property type="molecule type" value="mRNA"/>
</dbReference>
<dbReference type="EMBL" id="AK011661">
    <property type="protein sequence ID" value="BAC25342.1"/>
    <property type="molecule type" value="mRNA"/>
</dbReference>
<dbReference type="EMBL" id="AK157779">
    <property type="protein sequence ID" value="BAE34193.1"/>
    <property type="molecule type" value="mRNA"/>
</dbReference>
<dbReference type="CCDS" id="CCDS28826.2">
    <molecule id="Q99PP2-2"/>
</dbReference>
<dbReference type="CCDS" id="CCDS28827.2">
    <molecule id="Q99PP2-1"/>
</dbReference>
<dbReference type="PIR" id="JC7316">
    <property type="entry name" value="JC7316"/>
</dbReference>
<dbReference type="RefSeq" id="NP_067321.2">
    <molecule id="Q99PP2-2"/>
    <property type="nucleotide sequence ID" value="NM_021346.2"/>
</dbReference>
<dbReference type="RefSeq" id="NP_997554.2">
    <molecule id="Q99PP2-1"/>
    <property type="nucleotide sequence ID" value="NM_207671.4"/>
</dbReference>
<dbReference type="SMR" id="Q99PP2"/>
<dbReference type="BioGRID" id="208360">
    <property type="interactions" value="4"/>
</dbReference>
<dbReference type="FunCoup" id="Q99PP2">
    <property type="interactions" value="4546"/>
</dbReference>
<dbReference type="IntAct" id="Q99PP2">
    <property type="interactions" value="2"/>
</dbReference>
<dbReference type="MINT" id="Q99PP2"/>
<dbReference type="STRING" id="10090.ENSMUSP00000109109"/>
<dbReference type="GlyGen" id="Q99PP2">
    <property type="glycosylation" value="10 sites, 1 O-linked glycan (7 sites)"/>
</dbReference>
<dbReference type="iPTMnet" id="Q99PP2"/>
<dbReference type="PhosphoSitePlus" id="Q99PP2"/>
<dbReference type="jPOST" id="Q99PP2"/>
<dbReference type="PaxDb" id="10090-ENSMUSP00000109109"/>
<dbReference type="PeptideAtlas" id="Q99PP2"/>
<dbReference type="ProteomicsDB" id="302079">
    <molecule id="Q99PP2-1"/>
</dbReference>
<dbReference type="ProteomicsDB" id="302080">
    <molecule id="Q99PP2-2"/>
</dbReference>
<dbReference type="Pumba" id="Q99PP2"/>
<dbReference type="Antibodypedia" id="16456">
    <property type="antibodies" value="90 antibodies from 21 providers"/>
</dbReference>
<dbReference type="Ensembl" id="ENSMUST00000113481.9">
    <molecule id="Q99PP2-1"/>
    <property type="protein sequence ID" value="ENSMUSP00000109109.2"/>
    <property type="gene ID" value="ENSMUSG00000015597.18"/>
</dbReference>
<dbReference type="Ensembl" id="ENSMUST00000138127.8">
    <molecule id="Q99PP2-2"/>
    <property type="protein sequence ID" value="ENSMUSP00000116544.2"/>
    <property type="gene ID" value="ENSMUSG00000015597.18"/>
</dbReference>
<dbReference type="GeneID" id="57908"/>
<dbReference type="KEGG" id="mmu:57908"/>
<dbReference type="AGR" id="MGI:1889348"/>
<dbReference type="CTD" id="57908"/>
<dbReference type="MGI" id="MGI:1889348">
    <property type="gene designation" value="Zfp318"/>
</dbReference>
<dbReference type="VEuPathDB" id="HostDB:ENSMUSG00000015597"/>
<dbReference type="eggNOG" id="ENOG502R1ZF">
    <property type="taxonomic scope" value="Eukaryota"/>
</dbReference>
<dbReference type="GeneTree" id="ENSGT00390000000614"/>
<dbReference type="InParanoid" id="Q99PP2"/>
<dbReference type="OMA" id="DTLAMWT"/>
<dbReference type="OrthoDB" id="9909793at2759"/>
<dbReference type="TreeFam" id="TF350583"/>
<dbReference type="BioGRID-ORCS" id="57908">
    <property type="hits" value="8 hits in 76 CRISPR screens"/>
</dbReference>
<dbReference type="ChiTaRS" id="Zfp318">
    <property type="organism name" value="mouse"/>
</dbReference>
<dbReference type="PRO" id="PR:Q99PP2"/>
<dbReference type="Proteomes" id="UP000000589">
    <property type="component" value="Chromosome 17"/>
</dbReference>
<dbReference type="RNAct" id="Q99PP2">
    <property type="molecule type" value="protein"/>
</dbReference>
<dbReference type="Bgee" id="ENSMUSG00000015597">
    <property type="expression patterns" value="Expressed in embryonic post-anal tail and 248 other cell types or tissues"/>
</dbReference>
<dbReference type="ExpressionAtlas" id="Q99PP2">
    <property type="expression patterns" value="baseline and differential"/>
</dbReference>
<dbReference type="GO" id="GO:0005829">
    <property type="term" value="C:cytosol"/>
    <property type="evidence" value="ECO:0007669"/>
    <property type="project" value="Ensembl"/>
</dbReference>
<dbReference type="GO" id="GO:0005654">
    <property type="term" value="C:nucleoplasm"/>
    <property type="evidence" value="ECO:0007669"/>
    <property type="project" value="Ensembl"/>
</dbReference>
<dbReference type="GO" id="GO:0005634">
    <property type="term" value="C:nucleus"/>
    <property type="evidence" value="ECO:0000314"/>
    <property type="project" value="UniProtKB"/>
</dbReference>
<dbReference type="GO" id="GO:0003676">
    <property type="term" value="F:nucleic acid binding"/>
    <property type="evidence" value="ECO:0007669"/>
    <property type="project" value="InterPro"/>
</dbReference>
<dbReference type="GO" id="GO:0046982">
    <property type="term" value="F:protein heterodimerization activity"/>
    <property type="evidence" value="ECO:0000353"/>
    <property type="project" value="UniProtKB"/>
</dbReference>
<dbReference type="GO" id="GO:0042803">
    <property type="term" value="F:protein homodimerization activity"/>
    <property type="evidence" value="ECO:0000353"/>
    <property type="project" value="UniProtKB"/>
</dbReference>
<dbReference type="GO" id="GO:0008270">
    <property type="term" value="F:zinc ion binding"/>
    <property type="evidence" value="ECO:0007669"/>
    <property type="project" value="UniProtKB-KW"/>
</dbReference>
<dbReference type="GO" id="GO:0051321">
    <property type="term" value="P:meiotic cell cycle"/>
    <property type="evidence" value="ECO:0007669"/>
    <property type="project" value="UniProtKB-KW"/>
</dbReference>
<dbReference type="GO" id="GO:0045892">
    <property type="term" value="P:negative regulation of DNA-templated transcription"/>
    <property type="evidence" value="ECO:0000314"/>
    <property type="project" value="UniProtKB"/>
</dbReference>
<dbReference type="GO" id="GO:0045893">
    <property type="term" value="P:positive regulation of DNA-templated transcription"/>
    <property type="evidence" value="ECO:0000314"/>
    <property type="project" value="UniProtKB"/>
</dbReference>
<dbReference type="InterPro" id="IPR003604">
    <property type="entry name" value="Matrin/U1-like-C_Znf_C2H2"/>
</dbReference>
<dbReference type="InterPro" id="IPR055309">
    <property type="entry name" value="Znf318-like"/>
</dbReference>
<dbReference type="PANTHER" id="PTHR15577">
    <property type="entry name" value="ZINC FINGER CONTAINING PROTEIN"/>
    <property type="match status" value="1"/>
</dbReference>
<dbReference type="PANTHER" id="PTHR15577:SF2">
    <property type="entry name" value="ZINC FINGER PROTEIN 318"/>
    <property type="match status" value="1"/>
</dbReference>
<dbReference type="SMART" id="SM00451">
    <property type="entry name" value="ZnF_U1"/>
    <property type="match status" value="2"/>
</dbReference>
<evidence type="ECO:0000250" key="1">
    <source>
        <dbReference type="UniProtKB" id="Q5VUA4"/>
    </source>
</evidence>
<evidence type="ECO:0000255" key="2"/>
<evidence type="ECO:0000256" key="3">
    <source>
        <dbReference type="SAM" id="MobiDB-lite"/>
    </source>
</evidence>
<evidence type="ECO:0000269" key="4">
    <source>
    </source>
</evidence>
<evidence type="ECO:0000269" key="5">
    <source>
    </source>
</evidence>
<evidence type="ECO:0000269" key="6">
    <source>
    </source>
</evidence>
<evidence type="ECO:0000269" key="7">
    <source>
    </source>
</evidence>
<evidence type="ECO:0000303" key="8">
    <source>
    </source>
</evidence>
<evidence type="ECO:0000305" key="9"/>
<evidence type="ECO:0007744" key="10">
    <source>
    </source>
</evidence>
<reference key="1">
    <citation type="journal article" date="2009" name="PLoS Biol.">
        <title>Lineage-specific biology revealed by a finished genome assembly of the mouse.</title>
        <authorList>
            <person name="Church D.M."/>
            <person name="Goodstadt L."/>
            <person name="Hillier L.W."/>
            <person name="Zody M.C."/>
            <person name="Goldstein S."/>
            <person name="She X."/>
            <person name="Bult C.J."/>
            <person name="Agarwala R."/>
            <person name="Cherry J.L."/>
            <person name="DiCuccio M."/>
            <person name="Hlavina W."/>
            <person name="Kapustin Y."/>
            <person name="Meric P."/>
            <person name="Maglott D."/>
            <person name="Birtle Z."/>
            <person name="Marques A.C."/>
            <person name="Graves T."/>
            <person name="Zhou S."/>
            <person name="Teague B."/>
            <person name="Potamousis K."/>
            <person name="Churas C."/>
            <person name="Place M."/>
            <person name="Herschleb J."/>
            <person name="Runnheim R."/>
            <person name="Forrest D."/>
            <person name="Amos-Landgraf J."/>
            <person name="Schwartz D.C."/>
            <person name="Cheng Z."/>
            <person name="Lindblad-Toh K."/>
            <person name="Eichler E.E."/>
            <person name="Ponting C.P."/>
        </authorList>
    </citation>
    <scope>NUCLEOTIDE SEQUENCE [LARGE SCALE GENOMIC DNA]</scope>
    <source>
        <strain>C57BL/6J</strain>
    </source>
</reference>
<reference key="2">
    <citation type="journal article" date="2000" name="Biochem. Biophys. Res. Commun.">
        <title>The transcript for a novel protein with a zinc finger motif is expressed at specific stages of mouse spermatogenesis.</title>
        <authorList>
            <person name="Inoue A."/>
            <person name="Ishiji A."/>
            <person name="Kasagi S."/>
            <person name="Ishizuka M."/>
            <person name="Hirose S."/>
            <person name="Baba T."/>
            <person name="Hagiwara H."/>
        </authorList>
    </citation>
    <scope>NUCLEOTIDE SEQUENCE [MRNA] OF 175-2237 (ISOFORM 2)</scope>
    <scope>FUNCTION (ISOFORM 2)</scope>
    <scope>TISSUE SPECIFICITY (ISOFORM 2)</scope>
    <source>
        <strain>ddY</strain>
        <tissue>Testis</tissue>
    </source>
</reference>
<reference key="3">
    <citation type="journal article" date="2003" name="Biochem. Biophys. Res. Commun.">
        <title>Molecular cloning and characteristics of a novel zinc finger protein and its splice variant whose transcripts are expressed during spermatogenesis.</title>
        <authorList>
            <person name="Ishizuka M."/>
            <person name="Ohshima H."/>
            <person name="Tamura N."/>
            <person name="Nakada T."/>
            <person name="Inoue A."/>
            <person name="Hirose S."/>
            <person name="Hagiwara H."/>
        </authorList>
    </citation>
    <scope>NUCLEOTIDE SEQUENCE [MRNA] OF 175-2237 (ISOFORM 1)</scope>
    <scope>FUNCTION (ISOFORMS 1 AND 2)</scope>
    <scope>SUBCELLULAR LOCATION (ISOFORMS 1 AND 2)</scope>
    <scope>TISSUE SPECIFICITY (ISOFORMS 1 AND 2)</scope>
    <source>
        <strain>ddY</strain>
    </source>
</reference>
<reference key="4">
    <citation type="journal article" date="2004" name="Genome Res.">
        <title>The status, quality, and expansion of the NIH full-length cDNA project: the Mammalian Gene Collection (MGC).</title>
        <authorList>
            <consortium name="The MGC Project Team"/>
        </authorList>
    </citation>
    <scope>NUCLEOTIDE SEQUENCE [LARGE SCALE MRNA] OF 200-2237 (ISOFORM 1)</scope>
    <source>
        <tissue>Brain</tissue>
    </source>
</reference>
<reference key="5">
    <citation type="journal article" date="2005" name="Science">
        <title>The transcriptional landscape of the mammalian genome.</title>
        <authorList>
            <person name="Carninci P."/>
            <person name="Kasukawa T."/>
            <person name="Katayama S."/>
            <person name="Gough J."/>
            <person name="Frith M.C."/>
            <person name="Maeda N."/>
            <person name="Oyama R."/>
            <person name="Ravasi T."/>
            <person name="Lenhard B."/>
            <person name="Wells C."/>
            <person name="Kodzius R."/>
            <person name="Shimokawa K."/>
            <person name="Bajic V.B."/>
            <person name="Brenner S.E."/>
            <person name="Batalov S."/>
            <person name="Forrest A.R."/>
            <person name="Zavolan M."/>
            <person name="Davis M.J."/>
            <person name="Wilming L.G."/>
            <person name="Aidinis V."/>
            <person name="Allen J.E."/>
            <person name="Ambesi-Impiombato A."/>
            <person name="Apweiler R."/>
            <person name="Aturaliya R.N."/>
            <person name="Bailey T.L."/>
            <person name="Bansal M."/>
            <person name="Baxter L."/>
            <person name="Beisel K.W."/>
            <person name="Bersano T."/>
            <person name="Bono H."/>
            <person name="Chalk A.M."/>
            <person name="Chiu K.P."/>
            <person name="Choudhary V."/>
            <person name="Christoffels A."/>
            <person name="Clutterbuck D.R."/>
            <person name="Crowe M.L."/>
            <person name="Dalla E."/>
            <person name="Dalrymple B.P."/>
            <person name="de Bono B."/>
            <person name="Della Gatta G."/>
            <person name="di Bernardo D."/>
            <person name="Down T."/>
            <person name="Engstrom P."/>
            <person name="Fagiolini M."/>
            <person name="Faulkner G."/>
            <person name="Fletcher C.F."/>
            <person name="Fukushima T."/>
            <person name="Furuno M."/>
            <person name="Futaki S."/>
            <person name="Gariboldi M."/>
            <person name="Georgii-Hemming P."/>
            <person name="Gingeras T.R."/>
            <person name="Gojobori T."/>
            <person name="Green R.E."/>
            <person name="Gustincich S."/>
            <person name="Harbers M."/>
            <person name="Hayashi Y."/>
            <person name="Hensch T.K."/>
            <person name="Hirokawa N."/>
            <person name="Hill D."/>
            <person name="Huminiecki L."/>
            <person name="Iacono M."/>
            <person name="Ikeo K."/>
            <person name="Iwama A."/>
            <person name="Ishikawa T."/>
            <person name="Jakt M."/>
            <person name="Kanapin A."/>
            <person name="Katoh M."/>
            <person name="Kawasawa Y."/>
            <person name="Kelso J."/>
            <person name="Kitamura H."/>
            <person name="Kitano H."/>
            <person name="Kollias G."/>
            <person name="Krishnan S.P."/>
            <person name="Kruger A."/>
            <person name="Kummerfeld S.K."/>
            <person name="Kurochkin I.V."/>
            <person name="Lareau L.F."/>
            <person name="Lazarevic D."/>
            <person name="Lipovich L."/>
            <person name="Liu J."/>
            <person name="Liuni S."/>
            <person name="McWilliam S."/>
            <person name="Madan Babu M."/>
            <person name="Madera M."/>
            <person name="Marchionni L."/>
            <person name="Matsuda H."/>
            <person name="Matsuzawa S."/>
            <person name="Miki H."/>
            <person name="Mignone F."/>
            <person name="Miyake S."/>
            <person name="Morris K."/>
            <person name="Mottagui-Tabar S."/>
            <person name="Mulder N."/>
            <person name="Nakano N."/>
            <person name="Nakauchi H."/>
            <person name="Ng P."/>
            <person name="Nilsson R."/>
            <person name="Nishiguchi S."/>
            <person name="Nishikawa S."/>
            <person name="Nori F."/>
            <person name="Ohara O."/>
            <person name="Okazaki Y."/>
            <person name="Orlando V."/>
            <person name="Pang K.C."/>
            <person name="Pavan W.J."/>
            <person name="Pavesi G."/>
            <person name="Pesole G."/>
            <person name="Petrovsky N."/>
            <person name="Piazza S."/>
            <person name="Reed J."/>
            <person name="Reid J.F."/>
            <person name="Ring B.Z."/>
            <person name="Ringwald M."/>
            <person name="Rost B."/>
            <person name="Ruan Y."/>
            <person name="Salzberg S.L."/>
            <person name="Sandelin A."/>
            <person name="Schneider C."/>
            <person name="Schoenbach C."/>
            <person name="Sekiguchi K."/>
            <person name="Semple C.A."/>
            <person name="Seno S."/>
            <person name="Sessa L."/>
            <person name="Sheng Y."/>
            <person name="Shibata Y."/>
            <person name="Shimada H."/>
            <person name="Shimada K."/>
            <person name="Silva D."/>
            <person name="Sinclair B."/>
            <person name="Sperling S."/>
            <person name="Stupka E."/>
            <person name="Sugiura K."/>
            <person name="Sultana R."/>
            <person name="Takenaka Y."/>
            <person name="Taki K."/>
            <person name="Tammoja K."/>
            <person name="Tan S.L."/>
            <person name="Tang S."/>
            <person name="Taylor M.S."/>
            <person name="Tegner J."/>
            <person name="Teichmann S.A."/>
            <person name="Ueda H.R."/>
            <person name="van Nimwegen E."/>
            <person name="Verardo R."/>
            <person name="Wei C.L."/>
            <person name="Yagi K."/>
            <person name="Yamanishi H."/>
            <person name="Zabarovsky E."/>
            <person name="Zhu S."/>
            <person name="Zimmer A."/>
            <person name="Hide W."/>
            <person name="Bult C."/>
            <person name="Grimmond S.M."/>
            <person name="Teasdale R.D."/>
            <person name="Liu E.T."/>
            <person name="Brusic V."/>
            <person name="Quackenbush J."/>
            <person name="Wahlestedt C."/>
            <person name="Mattick J.S."/>
            <person name="Hume D.A."/>
            <person name="Kai C."/>
            <person name="Sasaki D."/>
            <person name="Tomaru Y."/>
            <person name="Fukuda S."/>
            <person name="Kanamori-Katayama M."/>
            <person name="Suzuki M."/>
            <person name="Aoki J."/>
            <person name="Arakawa T."/>
            <person name="Iida J."/>
            <person name="Imamura K."/>
            <person name="Itoh M."/>
            <person name="Kato T."/>
            <person name="Kawaji H."/>
            <person name="Kawagashira N."/>
            <person name="Kawashima T."/>
            <person name="Kojima M."/>
            <person name="Kondo S."/>
            <person name="Konno H."/>
            <person name="Nakano K."/>
            <person name="Ninomiya N."/>
            <person name="Nishio T."/>
            <person name="Okada M."/>
            <person name="Plessy C."/>
            <person name="Shibata K."/>
            <person name="Shiraki T."/>
            <person name="Suzuki S."/>
            <person name="Tagami M."/>
            <person name="Waki K."/>
            <person name="Watahiki A."/>
            <person name="Okamura-Oho Y."/>
            <person name="Suzuki H."/>
            <person name="Kawai J."/>
            <person name="Hayashizaki Y."/>
        </authorList>
    </citation>
    <scope>NUCLEOTIDE SEQUENCE [LARGE SCALE MRNA] OF 566-1230 AND 2172-2237 (ISOFORM 1)</scope>
    <source>
        <strain>C57BL/6J</strain>
        <tissue>Embryo</tissue>
    </source>
</reference>
<reference key="6">
    <citation type="journal article" date="2005" name="Biochem. Biophys. Res. Commun.">
        <title>A zinc finger protein TZF is a novel corepressor of androgen receptor.</title>
        <authorList>
            <person name="Ishizuka M."/>
            <person name="Kawate H."/>
            <person name="Takayanagi R."/>
            <person name="Ohshima H."/>
            <person name="Tao R.-H."/>
            <person name="Hagiwara H."/>
        </authorList>
    </citation>
    <scope>FUNCTION (ISOFORM 2)</scope>
    <scope>INTERACTION WITH AR (ISOFORM 2)</scope>
</reference>
<reference key="7">
    <citation type="journal article" date="2006" name="Biochem. Biophys. Res. Commun.">
        <title>Opposite effects of alternative TZF spliced variants on androgen receptor.</title>
        <authorList>
            <person name="Tao R.H."/>
            <person name="Kawate H."/>
            <person name="Ohnaka K."/>
            <person name="Ishizuka M."/>
            <person name="Hagiwara H."/>
            <person name="Takayanagi R."/>
        </authorList>
    </citation>
    <scope>FUNCTION (ISOFORMS 1 AND 2)</scope>
    <scope>SUBCELLULAR LOCATION (ISOFORMS 1 AND 2)</scope>
    <scope>INTERACTION WITH AR (ISOFORM 1)</scope>
    <scope>SUBUNIT</scope>
</reference>
<reference key="8">
    <citation type="journal article" date="2010" name="Cell">
        <title>A tissue-specific atlas of mouse protein phosphorylation and expression.</title>
        <authorList>
            <person name="Huttlin E.L."/>
            <person name="Jedrychowski M.P."/>
            <person name="Elias J.E."/>
            <person name="Goswami T."/>
            <person name="Rad R."/>
            <person name="Beausoleil S.A."/>
            <person name="Villen J."/>
            <person name="Haas W."/>
            <person name="Sowa M.E."/>
            <person name="Gygi S.P."/>
        </authorList>
    </citation>
    <scope>PHOSPHORYLATION [LARGE SCALE ANALYSIS] AT SER-69; SER-167; SER-205; TYR-237; SER-239; SER-246 AND SER-2206</scope>
    <scope>IDENTIFICATION BY MASS SPECTROMETRY [LARGE SCALE ANALYSIS]</scope>
    <source>
        <tissue>Brain</tissue>
        <tissue>Brown adipose tissue</tissue>
        <tissue>Heart</tissue>
        <tissue>Kidney</tissue>
        <tissue>Liver</tissue>
        <tissue>Lung</tissue>
        <tissue>Pancreas</tissue>
        <tissue>Spleen</tissue>
        <tissue>Testis</tissue>
    </source>
</reference>
<sequence length="2237" mass="246324">MYRSGSRSSVSSHRSKDGSASGPPPGRPVGASSGPTRRPSSPPPPSCSSLRLPARRHRSPSGHRGRWASPSPPRGRRGSPSPPRGRRASPSPTRGRRASPSPPRGRRGSPSPPRARRGSPSPPRSRRHYPPGLGGFRGSIRGESRADFARDGRGDHPGGGGGSRRRSPGLCSDSSLEESLRITVGNDHFCVSTPERRRLSDRLGSPVDGLQDMDRDDLTDDSVFTRSSQCSRGLERYISREEGPLSPFLGQLDEDYRTRETFLHRPEFSPQSSCHDELLRGTERNRDKLKSSSYSIRSEERSREAKRPRYDDTEKVHSSGGDHSSFTSGTRNYRQRRSSPSPRFLDPEFRELDLARRKREEEEEQSRSLSQELVGVGDDQIGCSIPGLAGVLTTSEPGYSLQRPEEVPMMPKKSILKKRIEADMKPSLQLESFSSGASSGEDHPLYSEHSPLPLSGAIAAFTSEIENKGTTVEADLKEPQSNLYQWGPLREIPKDNSEKFDSFLGFKEKLDLKAEGLEQQTDFLLPHERASQDGSGFSRILSMLADPTITQEKRRRSFPDIEDEEKFLYGDEEEDIKSESPLKSLEDPESAGTRQKANSLPSTPAVKLESLEESNPEYAKIHNLLKTIGLDIGVAEIGKLAARTQERLHGKKPSSRPSADRRLSADRHLSGDRHFSADRCSSVEHSFTADWRSSDPHRPESRETHHSNTQSPEVSHPHPASPVDPYLRTKNSPPFLKSDHPVCHVSGPEVVGSGFQSSVAVRCMLPSAPSTPIRLPHSAALSQFHIPGASQFAAARIPPNYQGSVIPSASFDAYRHYMAYAASRWPMYPASQPPSHPLSDPHRLLPVTKQAARSRPNLRVIPTVTPAKPKQEIPVLGSISVKRIPVRVSIPSLIKYNPKKISDEKNRASQKQKVIEEREKLKTEQEARQKKMFYLTTELERLHKQQGEMLRKKRREKDGHKDPLLMEVSRLQDSIMKDIAELHKETEEAEKKQSELDKVAQILGIDIFDKSLKSSNDSKESTEKPEKEKSKSPEKELSPSNSSSSNKESKMNEKSCIKSPSSTESLQPTVKQSDQPVAAYEYYDAGSHWCKDCNTTCGTMFDFFTHMHNKKHTQTLDPYNRPWASKTQSEAKQDTVKRTDKITVPAKGSEFLIPVTGFYCQLCEEFLGDPISGEQHVKGHQHNENYKKYVEENPLYEERRNLDRQAGLAVVLETERRRQNELKRKLNEKPKEEKIEKKARIVREVKEDDKAPGELEEQLSEDGSAPEKGEVKGNASLRPQVKEEVKKEPSVASIAASFGKFSWKKPEKEEEKGSVVTPGAPKEDTVETSKDRDDGKAEVGKAKPIKIKLSGKTVIAHTSPWTPVVTTSTQTKIRPNLPIPSTVLRKSGSATVSKPAPLNTFLSIKSSGTSTKPLPVVKESSSDLLLPPDIISKAFGGEEVVLKGSPEEKVELAEKNEPSQVPEQMLALLPPPPPPPPPPPPPPPPPPPQAVPQLSAPSPAQANVVLTPVKSNSVISQTFSLGFQGPNILNPGLPVAFMASEQPTVIPSDETAPGVSESDWDQTLISMLVRPPPPLSSVFSEQAKKLEKRNSCLATANAKDLYDIFYSSGGKGAHETKLSSSTLANGESSSLPRTESSDFSSTCTLNSSMSSEDLPQCSALVTATEISNLENPISKGMESTGKWSVVDQIDPKSRDSTYSFLQPLTRLYQNKPYEIVSPKTDTLVMWTSGSSQNDTHKDRPPEGKIRFDLGEPGPPGTDSTSHLSDTHCQTNGPQKLIEINLIDNQNKNQEVYQSEGCRESEMKRKTELKGKVATEEEEEEEEEGANSIEDSNSNHGNRNTWEGEIGQPKLSTVDKKGEQSSKLMTGHENTSKVVIELSPSLPSKRTKIDLFPSLLQNPKSMPELLLLSPAGSGLCLKRQEIWERPEKPGLEDVELQGTRPELTVTIESKVLENFDTTHLEVEGFASLRNLGDMHANFHNSQTEQTRRSPTALSEKMSEEISVSSVMCNPSSSSDIEPVPSFSGFPLESPKTLVLNFETEGAHSSSNSRNGRITSNSLETGHPVENVGHDLGGERTHQALDLLAGGMLSEDVKETSPLQKDLLRMESTTVSPSGLGPSPCLPDLVDFVTRTPGVPKQKPCSPLSEPDAFLKCSSLEMGSPPPEILSVSVSEVAVPQVSEDNDSALNLVKTPPSGSPSRDQVVGGNVSPREMPEQEAAVDVIPDHTRSNVYNSQDYLNG</sequence>
<proteinExistence type="evidence at protein level"/>
<comment type="function">
    <molecule>Isoform 2</molecule>
    <text evidence="4 5 6">Acts as a transcriptional corepressor for AR-mediated transactivation function. May act as a transcriptional regulator during spermatogenesis and in particular, during meiotic division.</text>
</comment>
<comment type="function">
    <molecule>Isoform 1</molecule>
    <text evidence="5 7">Acts as a transcriptional coactivator for AR-mediated transactivation function. May act as a transcriptional regulator during spermatogenesis and in particular, during meiotic division.</text>
</comment>
<comment type="subunit">
    <text evidence="6 7">Homodimer. Heterodimer of isoform 1 and isoform 2. Isoform 1 and isoform 2 interact with AR.</text>
</comment>
<comment type="subcellular location">
    <molecule>Isoform 1</molecule>
    <subcellularLocation>
        <location evidence="5 7">Nucleus</location>
    </subcellularLocation>
</comment>
<comment type="subcellular location">
    <molecule>Isoform 2</molecule>
    <subcellularLocation>
        <location evidence="5 7">Nucleus</location>
    </subcellularLocation>
</comment>
<comment type="alternative products">
    <event type="alternative splicing"/>
    <isoform>
        <id>Q99PP2-1</id>
        <name>1</name>
        <name>TZF-L</name>
        <sequence type="displayed"/>
    </isoform>
    <isoform>
        <id>Q99PP2-2</id>
        <name>2</name>
        <sequence type="described" ref="VSP_016594 VSP_016595"/>
    </isoform>
</comment>
<comment type="tissue specificity">
    <text evidence="4 5">Isoform 1 and isoform 2 are highly expressed in testis, moderately expressed in adrenal gland and uterus and faintly expressed in brain, kidney and liver. Isoform 1 is expressed more in adrenal gland, uterus and liver than isoform 2 is. Expression during testicular development of isoform 1 and isoform 2 is restricted to spermatocytes at the pachytene stage of meiotic prophase and to round and elongated spermatids.</text>
</comment>
<comment type="sequence caution" evidence="9">
    <conflict type="erroneous initiation">
        <sequence resource="EMBL-CDS" id="AAF61636"/>
    </conflict>
    <text>Truncated N-terminus.</text>
</comment>
<comment type="sequence caution" evidence="9">
    <conflict type="frameshift">
        <sequence resource="EMBL-CDS" id="AAF61636"/>
    </conflict>
</comment>
<comment type="sequence caution" evidence="9">
    <conflict type="erroneous initiation">
        <sequence resource="EMBL-CDS" id="AAI50731"/>
    </conflict>
    <text>Truncated N-terminus.</text>
</comment>
<comment type="sequence caution" evidence="9">
    <conflict type="frameshift">
        <sequence resource="EMBL-CDS" id="AAI50731"/>
    </conflict>
</comment>
<comment type="sequence caution" evidence="9">
    <conflict type="erroneous initiation">
        <sequence resource="EMBL-CDS" id="AAK00650"/>
    </conflict>
    <text>Truncated N-terminus.</text>
</comment>
<comment type="sequence caution" evidence="9">
    <conflict type="frameshift">
        <sequence resource="EMBL-CDS" id="AAK00650"/>
    </conflict>
</comment>
<name>ZN318_MOUSE</name>
<accession>Q99PP2</accession>
<accession>B0V2M3</accession>
<accession>B9EK88</accession>
<accession>Q3TZL5</accession>
<accession>Q8BMX9</accession>
<accession>Q9JJ01</accession>
<gene>
    <name type="primary">Znf318</name>
    <name type="synonym">Tzf</name>
    <name type="synonym">Zfp318</name>
</gene>